<organism>
    <name type="scientific">Synechococcus sp. (strain ATCC 27144 / PCC 6301 / SAUG 1402/1)</name>
    <name type="common">Anacystis nidulans</name>
    <dbReference type="NCBI Taxonomy" id="269084"/>
    <lineage>
        <taxon>Bacteria</taxon>
        <taxon>Bacillati</taxon>
        <taxon>Cyanobacteriota</taxon>
        <taxon>Cyanophyceae</taxon>
        <taxon>Synechococcales</taxon>
        <taxon>Synechococcaceae</taxon>
        <taxon>Synechococcus</taxon>
    </lineage>
</organism>
<dbReference type="EMBL" id="AP008231">
    <property type="protein sequence ID" value="BAD80488.1"/>
    <property type="molecule type" value="Genomic_DNA"/>
</dbReference>
<dbReference type="RefSeq" id="WP_011244608.1">
    <property type="nucleotide sequence ID" value="NZ_CP085785.1"/>
</dbReference>
<dbReference type="SMR" id="Q5MZN2"/>
<dbReference type="GeneID" id="72430666"/>
<dbReference type="KEGG" id="syc:syc2298_d"/>
<dbReference type="eggNOG" id="COG0691">
    <property type="taxonomic scope" value="Bacteria"/>
</dbReference>
<dbReference type="Proteomes" id="UP000001175">
    <property type="component" value="Chromosome"/>
</dbReference>
<dbReference type="GO" id="GO:0005829">
    <property type="term" value="C:cytosol"/>
    <property type="evidence" value="ECO:0007669"/>
    <property type="project" value="TreeGrafter"/>
</dbReference>
<dbReference type="GO" id="GO:0003723">
    <property type="term" value="F:RNA binding"/>
    <property type="evidence" value="ECO:0007669"/>
    <property type="project" value="UniProtKB-UniRule"/>
</dbReference>
<dbReference type="GO" id="GO:0070929">
    <property type="term" value="P:trans-translation"/>
    <property type="evidence" value="ECO:0007669"/>
    <property type="project" value="UniProtKB-UniRule"/>
</dbReference>
<dbReference type="CDD" id="cd09294">
    <property type="entry name" value="SmpB"/>
    <property type="match status" value="1"/>
</dbReference>
<dbReference type="Gene3D" id="2.40.280.10">
    <property type="match status" value="1"/>
</dbReference>
<dbReference type="HAMAP" id="MF_00023">
    <property type="entry name" value="SmpB"/>
    <property type="match status" value="1"/>
</dbReference>
<dbReference type="InterPro" id="IPR023620">
    <property type="entry name" value="SmpB"/>
</dbReference>
<dbReference type="InterPro" id="IPR000037">
    <property type="entry name" value="SsrA-bd_prot"/>
</dbReference>
<dbReference type="InterPro" id="IPR020081">
    <property type="entry name" value="SsrA-bd_prot_CS"/>
</dbReference>
<dbReference type="NCBIfam" id="NF003843">
    <property type="entry name" value="PRK05422.1"/>
    <property type="match status" value="1"/>
</dbReference>
<dbReference type="NCBIfam" id="TIGR00086">
    <property type="entry name" value="smpB"/>
    <property type="match status" value="1"/>
</dbReference>
<dbReference type="PANTHER" id="PTHR30308:SF2">
    <property type="entry name" value="SSRA-BINDING PROTEIN"/>
    <property type="match status" value="1"/>
</dbReference>
<dbReference type="PANTHER" id="PTHR30308">
    <property type="entry name" value="TMRNA-BINDING COMPONENT OF TRANS-TRANSLATION TAGGING COMPLEX"/>
    <property type="match status" value="1"/>
</dbReference>
<dbReference type="Pfam" id="PF01668">
    <property type="entry name" value="SmpB"/>
    <property type="match status" value="1"/>
</dbReference>
<dbReference type="SUPFAM" id="SSF74982">
    <property type="entry name" value="Small protein B (SmpB)"/>
    <property type="match status" value="1"/>
</dbReference>
<dbReference type="PROSITE" id="PS01317">
    <property type="entry name" value="SSRP"/>
    <property type="match status" value="1"/>
</dbReference>
<sequence>MADSGGIKVLSENRQARFQYEILETFETGIELLGTEVKSIRAGKVNLRDGFALVRNGEVWLHNIHISPHQQASAYYNHDPLRTRKLLMHREEIRKLIGKVEQKGLTLVPLKMYLKQGWVKVTLGLGRGKKLHDKRETERRRQDQRDIQRAIKRA</sequence>
<evidence type="ECO:0000255" key="1">
    <source>
        <dbReference type="HAMAP-Rule" id="MF_00023"/>
    </source>
</evidence>
<evidence type="ECO:0000256" key="2">
    <source>
        <dbReference type="SAM" id="MobiDB-lite"/>
    </source>
</evidence>
<reference key="1">
    <citation type="journal article" date="2007" name="Photosyn. Res.">
        <title>Complete nucleotide sequence of the freshwater unicellular cyanobacterium Synechococcus elongatus PCC 6301 chromosome: gene content and organization.</title>
        <authorList>
            <person name="Sugita C."/>
            <person name="Ogata K."/>
            <person name="Shikata M."/>
            <person name="Jikuya H."/>
            <person name="Takano J."/>
            <person name="Furumichi M."/>
            <person name="Kanehisa M."/>
            <person name="Omata T."/>
            <person name="Sugiura M."/>
            <person name="Sugita M."/>
        </authorList>
    </citation>
    <scope>NUCLEOTIDE SEQUENCE [LARGE SCALE GENOMIC DNA]</scope>
    <source>
        <strain>ATCC 27144 / PCC 6301 / SAUG 1402/1</strain>
    </source>
</reference>
<comment type="function">
    <text evidence="1">Required for rescue of stalled ribosomes mediated by trans-translation. Binds to transfer-messenger RNA (tmRNA), required for stable association of tmRNA with ribosomes. tmRNA and SmpB together mimic tRNA shape, replacing the anticodon stem-loop with SmpB. tmRNA is encoded by the ssrA gene; the 2 termini fold to resemble tRNA(Ala) and it encodes a 'tag peptide', a short internal open reading frame. During trans-translation Ala-aminoacylated tmRNA acts like a tRNA, entering the A-site of stalled ribosomes, displacing the stalled mRNA. The ribosome then switches to translate the ORF on the tmRNA; the nascent peptide is terminated with the 'tag peptide' encoded by the tmRNA and targeted for degradation. The ribosome is freed to recommence translation, which seems to be the essential function of trans-translation.</text>
</comment>
<comment type="subcellular location">
    <subcellularLocation>
        <location evidence="1">Cytoplasm</location>
    </subcellularLocation>
    <text evidence="1">The tmRNA-SmpB complex associates with stalled 70S ribosomes.</text>
</comment>
<comment type="similarity">
    <text evidence="1">Belongs to the SmpB family.</text>
</comment>
<proteinExistence type="inferred from homology"/>
<feature type="chain" id="PRO_0000103051" description="SsrA-binding protein">
    <location>
        <begin position="1"/>
        <end position="154"/>
    </location>
</feature>
<feature type="region of interest" description="Disordered" evidence="2">
    <location>
        <begin position="130"/>
        <end position="154"/>
    </location>
</feature>
<feature type="compositionally biased region" description="Basic and acidic residues" evidence="2">
    <location>
        <begin position="133"/>
        <end position="154"/>
    </location>
</feature>
<keyword id="KW-0963">Cytoplasm</keyword>
<keyword id="KW-0694">RNA-binding</keyword>
<name>SSRP_SYNP6</name>
<protein>
    <recommendedName>
        <fullName evidence="1">SsrA-binding protein</fullName>
    </recommendedName>
    <alternativeName>
        <fullName evidence="1">Small protein B</fullName>
    </alternativeName>
</protein>
<gene>
    <name evidence="1" type="primary">smpB</name>
    <name type="ordered locus">syc2298_d</name>
</gene>
<accession>Q5MZN2</accession>